<accession>Q711G3</accession>
<dbReference type="EC" id="3.1.-.-"/>
<dbReference type="EMBL" id="AABR03049942">
    <property type="status" value="NOT_ANNOTATED_CDS"/>
    <property type="molecule type" value="Genomic_DNA"/>
</dbReference>
<dbReference type="EMBL" id="AJ344542">
    <property type="protein sequence ID" value="CAC87844.1"/>
    <property type="status" value="ALT_INIT"/>
    <property type="molecule type" value="mRNA"/>
</dbReference>
<dbReference type="RefSeq" id="NP_001094010.1">
    <property type="nucleotide sequence ID" value="NM_001100540.1"/>
</dbReference>
<dbReference type="SMR" id="Q711G3"/>
<dbReference type="FunCoup" id="Q711G3">
    <property type="interactions" value="2028"/>
</dbReference>
<dbReference type="STRING" id="10116.ENSRNOP00000068696"/>
<dbReference type="GlyGen" id="Q711G3">
    <property type="glycosylation" value="1 site"/>
</dbReference>
<dbReference type="iPTMnet" id="Q711G3"/>
<dbReference type="PhosphoSitePlus" id="Q711G3"/>
<dbReference type="SwissPalm" id="Q711G3"/>
<dbReference type="jPOST" id="Q711G3"/>
<dbReference type="PaxDb" id="10116-ENSRNOP00000009824"/>
<dbReference type="Ensembl" id="ENSRNOT00000087180.2">
    <property type="protein sequence ID" value="ENSRNOP00000068696.1"/>
    <property type="gene ID" value="ENSRNOG00000060853.2"/>
</dbReference>
<dbReference type="GeneID" id="298917"/>
<dbReference type="KEGG" id="rno:298917"/>
<dbReference type="AGR" id="RGD:727866"/>
<dbReference type="CTD" id="285148"/>
<dbReference type="RGD" id="727866">
    <property type="gene designation" value="Iah1"/>
</dbReference>
<dbReference type="eggNOG" id="KOG3035">
    <property type="taxonomic scope" value="Eukaryota"/>
</dbReference>
<dbReference type="GeneTree" id="ENSGT00390000008069"/>
<dbReference type="HOGENOM" id="CLU_051989_0_2_1"/>
<dbReference type="InParanoid" id="Q711G3"/>
<dbReference type="OMA" id="VIWPKVI"/>
<dbReference type="OrthoDB" id="671439at2759"/>
<dbReference type="PhylomeDB" id="Q711G3"/>
<dbReference type="TreeFam" id="TF328918"/>
<dbReference type="PRO" id="PR:Q711G3"/>
<dbReference type="Proteomes" id="UP000002494">
    <property type="component" value="Chromosome 6"/>
</dbReference>
<dbReference type="Bgee" id="ENSRNOG00000060853">
    <property type="expression patterns" value="Expressed in adult mammalian kidney and 19 other cell types or tissues"/>
</dbReference>
<dbReference type="ExpressionAtlas" id="Q711G3">
    <property type="expression patterns" value="baseline and differential"/>
</dbReference>
<dbReference type="GO" id="GO:0016788">
    <property type="term" value="F:hydrolase activity, acting on ester bonds"/>
    <property type="evidence" value="ECO:0007669"/>
    <property type="project" value="InterPro"/>
</dbReference>
<dbReference type="GO" id="GO:0042802">
    <property type="term" value="F:identical protein binding"/>
    <property type="evidence" value="ECO:0000266"/>
    <property type="project" value="RGD"/>
</dbReference>
<dbReference type="GO" id="GO:0010467">
    <property type="term" value="P:gene expression"/>
    <property type="evidence" value="ECO:0007669"/>
    <property type="project" value="Ensembl"/>
</dbReference>
<dbReference type="GO" id="GO:0016042">
    <property type="term" value="P:lipid catabolic process"/>
    <property type="evidence" value="ECO:0007669"/>
    <property type="project" value="UniProtKB-KW"/>
</dbReference>
<dbReference type="CDD" id="cd01838">
    <property type="entry name" value="Isoamyl_acetate_hydrolase_like"/>
    <property type="match status" value="1"/>
</dbReference>
<dbReference type="FunFam" id="3.40.50.1110:FF:000002">
    <property type="entry name" value="isoamyl acetate-hydrolyzing esterase 1 homolog"/>
    <property type="match status" value="1"/>
</dbReference>
<dbReference type="Gene3D" id="3.40.50.1110">
    <property type="entry name" value="SGNH hydrolase"/>
    <property type="match status" value="1"/>
</dbReference>
<dbReference type="InterPro" id="IPR001087">
    <property type="entry name" value="GDSL"/>
</dbReference>
<dbReference type="InterPro" id="IPR045136">
    <property type="entry name" value="Iah1-like"/>
</dbReference>
<dbReference type="InterPro" id="IPR036514">
    <property type="entry name" value="SGNH_hydro_sf"/>
</dbReference>
<dbReference type="PANTHER" id="PTHR14209">
    <property type="entry name" value="ISOAMYL ACETATE-HYDROLYZING ESTERASE 1"/>
    <property type="match status" value="1"/>
</dbReference>
<dbReference type="PANTHER" id="PTHR14209:SF19">
    <property type="entry name" value="ISOAMYL ACETATE-HYDROLYZING ESTERASE 1 HOMOLOG"/>
    <property type="match status" value="1"/>
</dbReference>
<dbReference type="Pfam" id="PF00657">
    <property type="entry name" value="Lipase_GDSL"/>
    <property type="match status" value="1"/>
</dbReference>
<dbReference type="SUPFAM" id="SSF52266">
    <property type="entry name" value="SGNH hydrolase"/>
    <property type="match status" value="1"/>
</dbReference>
<organism>
    <name type="scientific">Rattus norvegicus</name>
    <name type="common">Rat</name>
    <dbReference type="NCBI Taxonomy" id="10116"/>
    <lineage>
        <taxon>Eukaryota</taxon>
        <taxon>Metazoa</taxon>
        <taxon>Chordata</taxon>
        <taxon>Craniata</taxon>
        <taxon>Vertebrata</taxon>
        <taxon>Euteleostomi</taxon>
        <taxon>Mammalia</taxon>
        <taxon>Eutheria</taxon>
        <taxon>Euarchontoglires</taxon>
        <taxon>Glires</taxon>
        <taxon>Rodentia</taxon>
        <taxon>Myomorpha</taxon>
        <taxon>Muroidea</taxon>
        <taxon>Muridae</taxon>
        <taxon>Murinae</taxon>
        <taxon>Rattus</taxon>
    </lineage>
</organism>
<reference key="1">
    <citation type="journal article" date="2004" name="Nature">
        <title>Genome sequence of the Brown Norway rat yields insights into mammalian evolution.</title>
        <authorList>
            <person name="Gibbs R.A."/>
            <person name="Weinstock G.M."/>
            <person name="Metzker M.L."/>
            <person name="Muzny D.M."/>
            <person name="Sodergren E.J."/>
            <person name="Scherer S."/>
            <person name="Scott G."/>
            <person name="Steffen D."/>
            <person name="Worley K.C."/>
            <person name="Burch P.E."/>
            <person name="Okwuonu G."/>
            <person name="Hines S."/>
            <person name="Lewis L."/>
            <person name="Deramo C."/>
            <person name="Delgado O."/>
            <person name="Dugan-Rocha S."/>
            <person name="Miner G."/>
            <person name="Morgan M."/>
            <person name="Hawes A."/>
            <person name="Gill R."/>
            <person name="Holt R.A."/>
            <person name="Adams M.D."/>
            <person name="Amanatides P.G."/>
            <person name="Baden-Tillson H."/>
            <person name="Barnstead M."/>
            <person name="Chin S."/>
            <person name="Evans C.A."/>
            <person name="Ferriera S."/>
            <person name="Fosler C."/>
            <person name="Glodek A."/>
            <person name="Gu Z."/>
            <person name="Jennings D."/>
            <person name="Kraft C.L."/>
            <person name="Nguyen T."/>
            <person name="Pfannkoch C.M."/>
            <person name="Sitter C."/>
            <person name="Sutton G.G."/>
            <person name="Venter J.C."/>
            <person name="Woodage T."/>
            <person name="Smith D."/>
            <person name="Lee H.-M."/>
            <person name="Gustafson E."/>
            <person name="Cahill P."/>
            <person name="Kana A."/>
            <person name="Doucette-Stamm L."/>
            <person name="Weinstock K."/>
            <person name="Fechtel K."/>
            <person name="Weiss R.B."/>
            <person name="Dunn D.M."/>
            <person name="Green E.D."/>
            <person name="Blakesley R.W."/>
            <person name="Bouffard G.G."/>
            <person name="De Jong P.J."/>
            <person name="Osoegawa K."/>
            <person name="Zhu B."/>
            <person name="Marra M."/>
            <person name="Schein J."/>
            <person name="Bosdet I."/>
            <person name="Fjell C."/>
            <person name="Jones S."/>
            <person name="Krzywinski M."/>
            <person name="Mathewson C."/>
            <person name="Siddiqui A."/>
            <person name="Wye N."/>
            <person name="McPherson J."/>
            <person name="Zhao S."/>
            <person name="Fraser C.M."/>
            <person name="Shetty J."/>
            <person name="Shatsman S."/>
            <person name="Geer K."/>
            <person name="Chen Y."/>
            <person name="Abramzon S."/>
            <person name="Nierman W.C."/>
            <person name="Havlak P.H."/>
            <person name="Chen R."/>
            <person name="Durbin K.J."/>
            <person name="Egan A."/>
            <person name="Ren Y."/>
            <person name="Song X.-Z."/>
            <person name="Li B."/>
            <person name="Liu Y."/>
            <person name="Qin X."/>
            <person name="Cawley S."/>
            <person name="Cooney A.J."/>
            <person name="D'Souza L.M."/>
            <person name="Martin K."/>
            <person name="Wu J.Q."/>
            <person name="Gonzalez-Garay M.L."/>
            <person name="Jackson A.R."/>
            <person name="Kalafus K.J."/>
            <person name="McLeod M.P."/>
            <person name="Milosavljevic A."/>
            <person name="Virk D."/>
            <person name="Volkov A."/>
            <person name="Wheeler D.A."/>
            <person name="Zhang Z."/>
            <person name="Bailey J.A."/>
            <person name="Eichler E.E."/>
            <person name="Tuzun E."/>
            <person name="Birney E."/>
            <person name="Mongin E."/>
            <person name="Ureta-Vidal A."/>
            <person name="Woodwark C."/>
            <person name="Zdobnov E."/>
            <person name="Bork P."/>
            <person name="Suyama M."/>
            <person name="Torrents D."/>
            <person name="Alexandersson M."/>
            <person name="Trask B.J."/>
            <person name="Young J.M."/>
            <person name="Huang H."/>
            <person name="Wang H."/>
            <person name="Xing H."/>
            <person name="Daniels S."/>
            <person name="Gietzen D."/>
            <person name="Schmidt J."/>
            <person name="Stevens K."/>
            <person name="Vitt U."/>
            <person name="Wingrove J."/>
            <person name="Camara F."/>
            <person name="Mar Alba M."/>
            <person name="Abril J.F."/>
            <person name="Guigo R."/>
            <person name="Smit A."/>
            <person name="Dubchak I."/>
            <person name="Rubin E.M."/>
            <person name="Couronne O."/>
            <person name="Poliakov A."/>
            <person name="Huebner N."/>
            <person name="Ganten D."/>
            <person name="Goesele C."/>
            <person name="Hummel O."/>
            <person name="Kreitler T."/>
            <person name="Lee Y.-A."/>
            <person name="Monti J."/>
            <person name="Schulz H."/>
            <person name="Zimdahl H."/>
            <person name="Himmelbauer H."/>
            <person name="Lehrach H."/>
            <person name="Jacob H.J."/>
            <person name="Bromberg S."/>
            <person name="Gullings-Handley J."/>
            <person name="Jensen-Seaman M.I."/>
            <person name="Kwitek A.E."/>
            <person name="Lazar J."/>
            <person name="Pasko D."/>
            <person name="Tonellato P.J."/>
            <person name="Twigger S."/>
            <person name="Ponting C.P."/>
            <person name="Duarte J.M."/>
            <person name="Rice S."/>
            <person name="Goodstadt L."/>
            <person name="Beatson S.A."/>
            <person name="Emes R.D."/>
            <person name="Winter E.E."/>
            <person name="Webber C."/>
            <person name="Brandt P."/>
            <person name="Nyakatura G."/>
            <person name="Adetobi M."/>
            <person name="Chiaromonte F."/>
            <person name="Elnitski L."/>
            <person name="Eswara P."/>
            <person name="Hardison R.C."/>
            <person name="Hou M."/>
            <person name="Kolbe D."/>
            <person name="Makova K."/>
            <person name="Miller W."/>
            <person name="Nekrutenko A."/>
            <person name="Riemer C."/>
            <person name="Schwartz S."/>
            <person name="Taylor J."/>
            <person name="Yang S."/>
            <person name="Zhang Y."/>
            <person name="Lindpaintner K."/>
            <person name="Andrews T.D."/>
            <person name="Caccamo M."/>
            <person name="Clamp M."/>
            <person name="Clarke L."/>
            <person name="Curwen V."/>
            <person name="Durbin R.M."/>
            <person name="Eyras E."/>
            <person name="Searle S.M."/>
            <person name="Cooper G.M."/>
            <person name="Batzoglou S."/>
            <person name="Brudno M."/>
            <person name="Sidow A."/>
            <person name="Stone E.A."/>
            <person name="Payseur B.A."/>
            <person name="Bourque G."/>
            <person name="Lopez-Otin C."/>
            <person name="Puente X.S."/>
            <person name="Chakrabarti K."/>
            <person name="Chatterji S."/>
            <person name="Dewey C."/>
            <person name="Pachter L."/>
            <person name="Bray N."/>
            <person name="Yap V.B."/>
            <person name="Caspi A."/>
            <person name="Tesler G."/>
            <person name="Pevzner P.A."/>
            <person name="Haussler D."/>
            <person name="Roskin K.M."/>
            <person name="Baertsch R."/>
            <person name="Clawson H."/>
            <person name="Furey T.S."/>
            <person name="Hinrichs A.S."/>
            <person name="Karolchik D."/>
            <person name="Kent W.J."/>
            <person name="Rosenbloom K.R."/>
            <person name="Trumbower H."/>
            <person name="Weirauch M."/>
            <person name="Cooper D.N."/>
            <person name="Stenson P.D."/>
            <person name="Ma B."/>
            <person name="Brent M."/>
            <person name="Arumugam M."/>
            <person name="Shteynberg D."/>
            <person name="Copley R.R."/>
            <person name="Taylor M.S."/>
            <person name="Riethman H."/>
            <person name="Mudunuri U."/>
            <person name="Peterson J."/>
            <person name="Guyer M."/>
            <person name="Felsenfeld A."/>
            <person name="Old S."/>
            <person name="Mockrin S."/>
            <person name="Collins F.S."/>
        </authorList>
    </citation>
    <scope>NUCLEOTIDE SEQUENCE [LARGE SCALE GENOMIC DNA]</scope>
    <source>
        <strain>Brown Norway</strain>
    </source>
</reference>
<reference key="2">
    <citation type="submission" date="2001-09" db="EMBL/GenBank/DDBJ databases">
        <title>Identification of genes responsive to the hypertrophic agonists phenylepherine and endothelin-1.</title>
        <authorList>
            <person name="Kemp T.J."/>
        </authorList>
    </citation>
    <scope>NUCLEOTIDE SEQUENCE [MRNA] OF 27-106</scope>
    <source>
        <strain>Sprague-Dawley</strain>
    </source>
</reference>
<feature type="chain" id="PRO_0000315725" description="Isoamyl acetate-hydrolyzing esterase 1 homolog">
    <location>
        <begin position="1"/>
        <end position="249"/>
    </location>
</feature>
<feature type="active site" description="Nucleophile" evidence="2">
    <location>
        <position position="24"/>
    </location>
</feature>
<feature type="active site" description="Proton donor" evidence="2">
    <location>
        <position position="197"/>
    </location>
</feature>
<feature type="active site" description="Proton acceptor" evidence="2">
    <location>
        <position position="200"/>
    </location>
</feature>
<feature type="site" description="Transition state stabilizer" evidence="2">
    <location>
        <position position="56"/>
    </location>
</feature>
<feature type="site" description="Transition state stabilizer" evidence="2">
    <location>
        <position position="89"/>
    </location>
</feature>
<feature type="modified residue" description="N6-succinyllysine" evidence="3">
    <location>
        <position position="63"/>
    </location>
</feature>
<feature type="sequence conflict" description="In Ref. 2; CAC87844." evidence="4" ref="2">
    <original>Q</original>
    <variation>R</variation>
    <location>
        <position position="32"/>
    </location>
</feature>
<protein>
    <recommendedName>
        <fullName>Isoamyl acetate-hydrolyzing esterase 1 homolog</fullName>
        <ecNumber>3.1.-.-</ecNumber>
    </recommendedName>
    <alternativeName>
        <fullName>Hypertrophic agonist-responsive protein B64</fullName>
    </alternativeName>
</protein>
<keyword id="KW-0378">Hydrolase</keyword>
<keyword id="KW-0442">Lipid degradation</keyword>
<keyword id="KW-0443">Lipid metabolism</keyword>
<keyword id="KW-1185">Reference proteome</keyword>
<proteinExistence type="evidence at transcript level"/>
<comment type="function">
    <text evidence="1">Probable lipase.</text>
</comment>
<comment type="similarity">
    <text evidence="4">Belongs to the 'GDSL' lipolytic enzyme family. IAH1 subfamily.</text>
</comment>
<comment type="sequence caution" evidence="4">
    <conflict type="erroneous initiation">
        <sequence resource="EMBL-CDS" id="CAC87844"/>
    </conflict>
</comment>
<gene>
    <name type="primary">Iah1</name>
    <name type="synonym">Harpb64</name>
</gene>
<evidence type="ECO:0000250" key="1"/>
<evidence type="ECO:0000250" key="2">
    <source>
        <dbReference type="UniProtKB" id="P41734"/>
    </source>
</evidence>
<evidence type="ECO:0000250" key="3">
    <source>
        <dbReference type="UniProtKB" id="Q9DB29"/>
    </source>
</evidence>
<evidence type="ECO:0000305" key="4"/>
<sequence length="249" mass="28004">MSLCELAASGSSLLWPRVLLFGDSITQFSFQQGGWGTLLADRLVRKCDVLNRGFSGYNTRWAKIILPRIIRKGAGLENPVAVTIFFGANDSTLKDENPKQHVPLDEYSANLRDMVQYLRSVDIPKERVILITPPPLCEAAWEKECILKGCKLNRLNVAVGEYAKACLQVARDCGTDVLDLWTLMQKDNQDFSSYLSDGLHLSPLGNEFLFFHLWPLLDKKVSSLPRLLPDWKDVEETKPELSLLGDGDH</sequence>
<name>IAH1_RAT</name>